<keyword id="KW-0687">Ribonucleoprotein</keyword>
<keyword id="KW-0689">Ribosomal protein</keyword>
<feature type="chain" id="PRO_1000017563" description="Large ribosomal subunit protein bL27">
    <location>
        <begin position="1"/>
        <end position="85"/>
    </location>
</feature>
<feature type="region of interest" description="Disordered" evidence="2">
    <location>
        <begin position="1"/>
        <end position="21"/>
    </location>
</feature>
<sequence>MAHKKAGGSTRNGRDSESKRLGVKMYGGQVIKPGNIIVRQRGTEFHAGYGVGMGKDHTLFAKIEGVIKFEKKGEFMRRYVSIVAA</sequence>
<proteinExistence type="inferred from homology"/>
<reference key="1">
    <citation type="submission" date="2007-05" db="EMBL/GenBank/DDBJ databases">
        <title>Complete sequence of Pseudomonas putida F1.</title>
        <authorList>
            <consortium name="US DOE Joint Genome Institute"/>
            <person name="Copeland A."/>
            <person name="Lucas S."/>
            <person name="Lapidus A."/>
            <person name="Barry K."/>
            <person name="Detter J.C."/>
            <person name="Glavina del Rio T."/>
            <person name="Hammon N."/>
            <person name="Israni S."/>
            <person name="Dalin E."/>
            <person name="Tice H."/>
            <person name="Pitluck S."/>
            <person name="Chain P."/>
            <person name="Malfatti S."/>
            <person name="Shin M."/>
            <person name="Vergez L."/>
            <person name="Schmutz J."/>
            <person name="Larimer F."/>
            <person name="Land M."/>
            <person name="Hauser L."/>
            <person name="Kyrpides N."/>
            <person name="Lykidis A."/>
            <person name="Parales R."/>
            <person name="Richardson P."/>
        </authorList>
    </citation>
    <scope>NUCLEOTIDE SEQUENCE [LARGE SCALE GENOMIC DNA]</scope>
    <source>
        <strain>ATCC 700007 / DSM 6899 / JCM 31910 / BCRC 17059 / LMG 24140 / F1</strain>
    </source>
</reference>
<gene>
    <name evidence="1" type="primary">rpmA</name>
    <name type="ordered locus">Pput_0721</name>
</gene>
<organism>
    <name type="scientific">Pseudomonas putida (strain ATCC 700007 / DSM 6899 / JCM 31910 / BCRC 17059 / LMG 24140 / F1)</name>
    <dbReference type="NCBI Taxonomy" id="351746"/>
    <lineage>
        <taxon>Bacteria</taxon>
        <taxon>Pseudomonadati</taxon>
        <taxon>Pseudomonadota</taxon>
        <taxon>Gammaproteobacteria</taxon>
        <taxon>Pseudomonadales</taxon>
        <taxon>Pseudomonadaceae</taxon>
        <taxon>Pseudomonas</taxon>
    </lineage>
</organism>
<protein>
    <recommendedName>
        <fullName evidence="1">Large ribosomal subunit protein bL27</fullName>
    </recommendedName>
    <alternativeName>
        <fullName evidence="3">50S ribosomal protein L27</fullName>
    </alternativeName>
</protein>
<accession>A5VYC5</accession>
<comment type="similarity">
    <text evidence="1">Belongs to the bacterial ribosomal protein bL27 family.</text>
</comment>
<dbReference type="EMBL" id="CP000712">
    <property type="protein sequence ID" value="ABQ76885.1"/>
    <property type="molecule type" value="Genomic_DNA"/>
</dbReference>
<dbReference type="SMR" id="A5VYC5"/>
<dbReference type="KEGG" id="ppf:Pput_0721"/>
<dbReference type="eggNOG" id="COG0211">
    <property type="taxonomic scope" value="Bacteria"/>
</dbReference>
<dbReference type="HOGENOM" id="CLU_095424_4_1_6"/>
<dbReference type="GO" id="GO:0022625">
    <property type="term" value="C:cytosolic large ribosomal subunit"/>
    <property type="evidence" value="ECO:0007669"/>
    <property type="project" value="TreeGrafter"/>
</dbReference>
<dbReference type="GO" id="GO:0003735">
    <property type="term" value="F:structural constituent of ribosome"/>
    <property type="evidence" value="ECO:0007669"/>
    <property type="project" value="InterPro"/>
</dbReference>
<dbReference type="GO" id="GO:0006412">
    <property type="term" value="P:translation"/>
    <property type="evidence" value="ECO:0007669"/>
    <property type="project" value="UniProtKB-UniRule"/>
</dbReference>
<dbReference type="FunFam" id="2.40.50.100:FF:000001">
    <property type="entry name" value="50S ribosomal protein L27"/>
    <property type="match status" value="1"/>
</dbReference>
<dbReference type="Gene3D" id="2.40.50.100">
    <property type="match status" value="1"/>
</dbReference>
<dbReference type="HAMAP" id="MF_00539">
    <property type="entry name" value="Ribosomal_bL27"/>
    <property type="match status" value="1"/>
</dbReference>
<dbReference type="InterPro" id="IPR001684">
    <property type="entry name" value="Ribosomal_bL27"/>
</dbReference>
<dbReference type="InterPro" id="IPR018261">
    <property type="entry name" value="Ribosomal_bL27_CS"/>
</dbReference>
<dbReference type="NCBIfam" id="TIGR00062">
    <property type="entry name" value="L27"/>
    <property type="match status" value="1"/>
</dbReference>
<dbReference type="PANTHER" id="PTHR15893:SF0">
    <property type="entry name" value="LARGE RIBOSOMAL SUBUNIT PROTEIN BL27M"/>
    <property type="match status" value="1"/>
</dbReference>
<dbReference type="PANTHER" id="PTHR15893">
    <property type="entry name" value="RIBOSOMAL PROTEIN L27"/>
    <property type="match status" value="1"/>
</dbReference>
<dbReference type="Pfam" id="PF01016">
    <property type="entry name" value="Ribosomal_L27"/>
    <property type="match status" value="1"/>
</dbReference>
<dbReference type="PRINTS" id="PR00063">
    <property type="entry name" value="RIBOSOMALL27"/>
</dbReference>
<dbReference type="SUPFAM" id="SSF110324">
    <property type="entry name" value="Ribosomal L27 protein-like"/>
    <property type="match status" value="1"/>
</dbReference>
<dbReference type="PROSITE" id="PS00831">
    <property type="entry name" value="RIBOSOMAL_L27"/>
    <property type="match status" value="1"/>
</dbReference>
<name>RL27_PSEP1</name>
<evidence type="ECO:0000255" key="1">
    <source>
        <dbReference type="HAMAP-Rule" id="MF_00539"/>
    </source>
</evidence>
<evidence type="ECO:0000256" key="2">
    <source>
        <dbReference type="SAM" id="MobiDB-lite"/>
    </source>
</evidence>
<evidence type="ECO:0000305" key="3"/>